<feature type="chain" id="PRO_0000438168" description="Villin-5">
    <location>
        <begin position="1"/>
        <end position="955"/>
    </location>
</feature>
<feature type="repeat" description="Gelsolin-like 1" evidence="3">
    <location>
        <begin position="29"/>
        <end position="111"/>
    </location>
</feature>
<feature type="repeat" description="Gelsolin-like 2" evidence="3">
    <location>
        <begin position="152"/>
        <end position="218"/>
    </location>
</feature>
<feature type="repeat" description="Gelsolin-like 3" evidence="3">
    <location>
        <begin position="274"/>
        <end position="339"/>
    </location>
</feature>
<feature type="repeat" description="Gelsolin-like 4" evidence="3">
    <location>
        <begin position="644"/>
        <end position="712"/>
    </location>
</feature>
<feature type="domain" description="HP" evidence="4">
    <location>
        <begin position="890"/>
        <end position="955"/>
    </location>
</feature>
<feature type="region of interest" description="Disordered" evidence="5">
    <location>
        <begin position="741"/>
        <end position="783"/>
    </location>
</feature>
<feature type="region of interest" description="Disordered" evidence="5">
    <location>
        <begin position="801"/>
        <end position="895"/>
    </location>
</feature>
<feature type="compositionally biased region" description="Polar residues" evidence="5">
    <location>
        <begin position="756"/>
        <end position="776"/>
    </location>
</feature>
<feature type="compositionally biased region" description="Low complexity" evidence="5">
    <location>
        <begin position="817"/>
        <end position="836"/>
    </location>
</feature>
<feature type="compositionally biased region" description="Basic and acidic residues" evidence="5">
    <location>
        <begin position="842"/>
        <end position="864"/>
    </location>
</feature>
<feature type="compositionally biased region" description="Polar residues" evidence="5">
    <location>
        <begin position="867"/>
        <end position="878"/>
    </location>
</feature>
<dbReference type="EMBL" id="AP008214">
    <property type="protein sequence ID" value="BAF23249.1"/>
    <property type="molecule type" value="Genomic_DNA"/>
</dbReference>
<dbReference type="EMBL" id="AP014964">
    <property type="protein sequence ID" value="BAT04494.1"/>
    <property type="molecule type" value="Genomic_DNA"/>
</dbReference>
<dbReference type="RefSeq" id="XP_015650776.1">
    <property type="nucleotide sequence ID" value="XM_015795290.1"/>
</dbReference>
<dbReference type="SMR" id="Q0J716"/>
<dbReference type="FunCoup" id="Q0J716">
    <property type="interactions" value="1762"/>
</dbReference>
<dbReference type="STRING" id="39947.Q0J716"/>
<dbReference type="PaxDb" id="39947-Q0J716"/>
<dbReference type="EnsemblPlants" id="Os08t0240800-01">
    <property type="protein sequence ID" value="Os08t0240800-01"/>
    <property type="gene ID" value="Os08g0240800"/>
</dbReference>
<dbReference type="Gramene" id="Os08t0240800-01">
    <property type="protein sequence ID" value="Os08t0240800-01"/>
    <property type="gene ID" value="Os08g0240800"/>
</dbReference>
<dbReference type="KEGG" id="dosa:Os08g0240800"/>
<dbReference type="eggNOG" id="KOG0443">
    <property type="taxonomic scope" value="Eukaryota"/>
</dbReference>
<dbReference type="HOGENOM" id="CLU_002568_2_1_1"/>
<dbReference type="InParanoid" id="Q0J716"/>
<dbReference type="OMA" id="EPASFWV"/>
<dbReference type="OrthoDB" id="6375767at2759"/>
<dbReference type="Proteomes" id="UP000000763">
    <property type="component" value="Chromosome 8"/>
</dbReference>
<dbReference type="Proteomes" id="UP000059680">
    <property type="component" value="Chromosome 8"/>
</dbReference>
<dbReference type="GO" id="GO:0032432">
    <property type="term" value="C:actin filament bundle"/>
    <property type="evidence" value="ECO:0000250"/>
    <property type="project" value="UniProtKB"/>
</dbReference>
<dbReference type="GO" id="GO:0005737">
    <property type="term" value="C:cytoplasm"/>
    <property type="evidence" value="ECO:0007669"/>
    <property type="project" value="UniProtKB-KW"/>
</dbReference>
<dbReference type="GO" id="GO:0051015">
    <property type="term" value="F:actin filament binding"/>
    <property type="evidence" value="ECO:0000250"/>
    <property type="project" value="UniProtKB"/>
</dbReference>
<dbReference type="GO" id="GO:0051693">
    <property type="term" value="P:actin filament capping"/>
    <property type="evidence" value="ECO:0000250"/>
    <property type="project" value="UniProtKB"/>
</dbReference>
<dbReference type="GO" id="GO:0007015">
    <property type="term" value="P:actin filament organization"/>
    <property type="evidence" value="ECO:0000250"/>
    <property type="project" value="UniProtKB"/>
</dbReference>
<dbReference type="GO" id="GO:0051014">
    <property type="term" value="P:actin filament severing"/>
    <property type="evidence" value="ECO:0000250"/>
    <property type="project" value="UniProtKB"/>
</dbReference>
<dbReference type="CDD" id="cd11290">
    <property type="entry name" value="gelsolin_S1_like"/>
    <property type="match status" value="1"/>
</dbReference>
<dbReference type="CDD" id="cd11289">
    <property type="entry name" value="gelsolin_S2_like"/>
    <property type="match status" value="1"/>
</dbReference>
<dbReference type="CDD" id="cd11292">
    <property type="entry name" value="gelsolin_S3_like"/>
    <property type="match status" value="1"/>
</dbReference>
<dbReference type="CDD" id="cd11293">
    <property type="entry name" value="gelsolin_S4_like"/>
    <property type="match status" value="1"/>
</dbReference>
<dbReference type="CDD" id="cd11288">
    <property type="entry name" value="gelsolin_S5_like"/>
    <property type="match status" value="1"/>
</dbReference>
<dbReference type="CDD" id="cd11291">
    <property type="entry name" value="gelsolin_S6_like"/>
    <property type="match status" value="1"/>
</dbReference>
<dbReference type="FunFam" id="3.40.20.10:FF:000001">
    <property type="entry name" value="Gelsolin"/>
    <property type="match status" value="1"/>
</dbReference>
<dbReference type="FunFam" id="3.40.20.10:FF:000002">
    <property type="entry name" value="Gelsolin"/>
    <property type="match status" value="1"/>
</dbReference>
<dbReference type="FunFam" id="3.40.20.10:FF:000033">
    <property type="entry name" value="Villin-4"/>
    <property type="match status" value="1"/>
</dbReference>
<dbReference type="FunFam" id="3.40.20.10:FF:000039">
    <property type="entry name" value="Villin-4"/>
    <property type="match status" value="1"/>
</dbReference>
<dbReference type="FunFam" id="1.10.950.10:FF:000004">
    <property type="entry name" value="Villin-like 1"/>
    <property type="match status" value="1"/>
</dbReference>
<dbReference type="FunFam" id="3.40.20.10:FF:000028">
    <property type="entry name" value="Villin-like 1"/>
    <property type="match status" value="1"/>
</dbReference>
<dbReference type="FunFam" id="3.40.20.10:FF:000038">
    <property type="entry name" value="Villin-like 1"/>
    <property type="match status" value="1"/>
</dbReference>
<dbReference type="Gene3D" id="3.40.20.10">
    <property type="entry name" value="Severin"/>
    <property type="match status" value="6"/>
</dbReference>
<dbReference type="Gene3D" id="1.10.950.10">
    <property type="entry name" value="Villin headpiece domain"/>
    <property type="match status" value="1"/>
</dbReference>
<dbReference type="InterPro" id="IPR029006">
    <property type="entry name" value="ADF-H/Gelsolin-like_dom_sf"/>
</dbReference>
<dbReference type="InterPro" id="IPR007123">
    <property type="entry name" value="Gelsolin-like_dom"/>
</dbReference>
<dbReference type="InterPro" id="IPR036180">
    <property type="entry name" value="Gelsolin-like_dom_sf"/>
</dbReference>
<dbReference type="InterPro" id="IPR007122">
    <property type="entry name" value="Villin/Gelsolin"/>
</dbReference>
<dbReference type="InterPro" id="IPR003128">
    <property type="entry name" value="Villin_headpiece"/>
</dbReference>
<dbReference type="InterPro" id="IPR036886">
    <property type="entry name" value="Villin_headpiece_dom_sf"/>
</dbReference>
<dbReference type="PANTHER" id="PTHR11977">
    <property type="entry name" value="VILLIN"/>
    <property type="match status" value="1"/>
</dbReference>
<dbReference type="PANTHER" id="PTHR11977:SF138">
    <property type="entry name" value="VILLIN-4"/>
    <property type="match status" value="1"/>
</dbReference>
<dbReference type="Pfam" id="PF00626">
    <property type="entry name" value="Gelsolin"/>
    <property type="match status" value="4"/>
</dbReference>
<dbReference type="Pfam" id="PF02209">
    <property type="entry name" value="VHP"/>
    <property type="match status" value="1"/>
</dbReference>
<dbReference type="PRINTS" id="PR00597">
    <property type="entry name" value="GELSOLIN"/>
</dbReference>
<dbReference type="SMART" id="SM00262">
    <property type="entry name" value="GEL"/>
    <property type="match status" value="6"/>
</dbReference>
<dbReference type="SMART" id="SM00153">
    <property type="entry name" value="VHP"/>
    <property type="match status" value="1"/>
</dbReference>
<dbReference type="SUPFAM" id="SSF55753">
    <property type="entry name" value="Actin depolymerizing proteins"/>
    <property type="match status" value="5"/>
</dbReference>
<dbReference type="SUPFAM" id="SSF82754">
    <property type="entry name" value="C-terminal, gelsolin-like domain of Sec23/24"/>
    <property type="match status" value="1"/>
</dbReference>
<dbReference type="SUPFAM" id="SSF47050">
    <property type="entry name" value="VHP, Villin headpiece domain"/>
    <property type="match status" value="1"/>
</dbReference>
<dbReference type="PROSITE" id="PS51089">
    <property type="entry name" value="HP"/>
    <property type="match status" value="1"/>
</dbReference>
<reference key="1">
    <citation type="journal article" date="2005" name="Nature">
        <title>The map-based sequence of the rice genome.</title>
        <authorList>
            <consortium name="International rice genome sequencing project (IRGSP)"/>
        </authorList>
    </citation>
    <scope>NUCLEOTIDE SEQUENCE [LARGE SCALE GENOMIC DNA]</scope>
    <source>
        <strain>cv. Nipponbare</strain>
    </source>
</reference>
<reference key="2">
    <citation type="journal article" date="2008" name="Nucleic Acids Res.">
        <title>The rice annotation project database (RAP-DB): 2008 update.</title>
        <authorList>
            <consortium name="The rice annotation project (RAP)"/>
        </authorList>
    </citation>
    <scope>GENOME REANNOTATION</scope>
    <source>
        <strain>cv. Nipponbare</strain>
    </source>
</reference>
<reference key="3">
    <citation type="journal article" date="2013" name="Rice">
        <title>Improvement of the Oryza sativa Nipponbare reference genome using next generation sequence and optical map data.</title>
        <authorList>
            <person name="Kawahara Y."/>
            <person name="de la Bastide M."/>
            <person name="Hamilton J.P."/>
            <person name="Kanamori H."/>
            <person name="McCombie W.R."/>
            <person name="Ouyang S."/>
            <person name="Schwartz D.C."/>
            <person name="Tanaka T."/>
            <person name="Wu J."/>
            <person name="Zhou S."/>
            <person name="Childs K.L."/>
            <person name="Davidson R.M."/>
            <person name="Lin H."/>
            <person name="Quesada-Ocampo L."/>
            <person name="Vaillancourt B."/>
            <person name="Sakai H."/>
            <person name="Lee S.S."/>
            <person name="Kim J."/>
            <person name="Numa H."/>
            <person name="Itoh T."/>
            <person name="Buell C.R."/>
            <person name="Matsumoto T."/>
        </authorList>
    </citation>
    <scope>GENOME REANNOTATION</scope>
    <source>
        <strain>cv. Nipponbare</strain>
    </source>
</reference>
<reference key="4">
    <citation type="journal article" date="2010" name="Plant Cell">
        <title>Arabidopsis VILLIN1 and VILLIN3 have overlapping and distinct activities in actin bundle formation and turnover.</title>
        <authorList>
            <person name="Khurana P."/>
            <person name="Henty J.L."/>
            <person name="Huang S."/>
            <person name="Staiger A.M."/>
            <person name="Blanchoin L."/>
            <person name="Staiger C.J."/>
        </authorList>
    </citation>
    <scope>GENE FAMILY</scope>
    <scope>NOMENCLATURE</scope>
</reference>
<protein>
    <recommendedName>
        <fullName evidence="6">Villin-5</fullName>
    </recommendedName>
</protein>
<sequence>MSVSMKDLDPAFRGAGQKEGLEIWRIENFKPVPIPASSYGKFFMGDSYIILKTTALKNGSLRHDIHYWIGKDTSQDESGTAAILTVELDAALGGRAVQYREIQGNETDKFLSYFRPCIMPQPGGVASGFKHVEVNEQEHETRLYVCTGNRVVHVKEVPFARSSLNHDDIFILDTKSKIFQFNGSNSSIQERAKALEVVQYIKDTFHEGKCEVAAVEDGRLMADAEAGEFWGFFGGFAPLPRRAPVEDNEKYEETVFKLLCFNQGKLEPINYESLLHELLKTNKCYLLDCGVELFVWMGRTTSLQERKSASEAAEKLLSDDNRTKTHVIKVIEGFETVMFKSKFKEWPQTPDLKLSSEDGRGKVAALLKRQGLNVKGLMKAAPAKEEPQAYIDCTGSLQVWRINDKDKILLPSADQSKFYTGDCYIFQYMYPGDDKEECLIGSWFGKKSIEEDRVTAISLASKMVESAKFQAVQTRLYEGKEPIQFFVIFQSFQVFKGGLSSGYKKFIAENGIDDDTYLEDGLALFRIQGSGPENMQAIQVDAAASSLNSSYSYILHDGNTVFTWTGNLTTSLDQEVVERQLDIIKPNSQSRSQKEGSETDQFWSLLGGKSEYPSQKIGRANESDPHLFSCILPKGNLKIKEIYHFTQDDLMTEDVFILDCHSDIFVWVGQQVDVKVRLQALDIGEKFVKLDFLMENLSSDTPIFVIMEGSEPTFFTRFFTWDSAKSLMHGNSYQRKLSIVKGGGSPALDKPKRRTPTYSGRSTVQDKSQRSRSMSFSPERVRVRGRSPAFTALAANFESANSRNLSTPPPVVKKLYPKSATPDSSSAPSKSSATASLTGSFDRPKSVKDGSELEKPKQEEDAKEGINTMTSRVESLTINEDVKENEPEDDEGLPVYPYDRLITTAADPVTEIDVTRRETYLSSAEFKDKFGMTKEAFSKLPKWKQNRMKIALQLF</sequence>
<keyword id="KW-0117">Actin capping</keyword>
<keyword id="KW-0009">Actin-binding</keyword>
<keyword id="KW-0106">Calcium</keyword>
<keyword id="KW-0963">Cytoplasm</keyword>
<keyword id="KW-0206">Cytoskeleton</keyword>
<keyword id="KW-1185">Reference proteome</keyword>
<keyword id="KW-0677">Repeat</keyword>
<gene>
    <name evidence="6" type="primary">VLN5</name>
    <name evidence="7" type="ordered locus">LOC_Os08g14230</name>
    <name evidence="8" type="ordered locus">Os08g0240800</name>
    <name evidence="9" type="ORF">OSNPB_080240800</name>
</gene>
<comment type="function">
    <text evidence="1 2">Ca(2+)-regulated actin-binding protein (By similarity). Binds actin microfilaments (MFs). Involved in actin filament bundling, severing and capping. Caps the barbed end of actin filaments and is able to sever them in a calcium-dependent manner (By similarity).</text>
</comment>
<comment type="subcellular location">
    <subcellularLocation>
        <location evidence="1">Cytoplasm</location>
        <location evidence="1">Cytoskeleton</location>
    </subcellularLocation>
</comment>
<comment type="similarity">
    <text evidence="7">Belongs to the villin/gelsolin family.</text>
</comment>
<organism>
    <name type="scientific">Oryza sativa subsp. japonica</name>
    <name type="common">Rice</name>
    <dbReference type="NCBI Taxonomy" id="39947"/>
    <lineage>
        <taxon>Eukaryota</taxon>
        <taxon>Viridiplantae</taxon>
        <taxon>Streptophyta</taxon>
        <taxon>Embryophyta</taxon>
        <taxon>Tracheophyta</taxon>
        <taxon>Spermatophyta</taxon>
        <taxon>Magnoliopsida</taxon>
        <taxon>Liliopsida</taxon>
        <taxon>Poales</taxon>
        <taxon>Poaceae</taxon>
        <taxon>BOP clade</taxon>
        <taxon>Oryzoideae</taxon>
        <taxon>Oryzeae</taxon>
        <taxon>Oryzinae</taxon>
        <taxon>Oryza</taxon>
        <taxon>Oryza sativa</taxon>
    </lineage>
</organism>
<accession>Q0J716</accession>
<evidence type="ECO:0000250" key="1">
    <source>
        <dbReference type="UniProtKB" id="O81644"/>
    </source>
</evidence>
<evidence type="ECO:0000250" key="2">
    <source>
        <dbReference type="UniProtKB" id="Q10L71"/>
    </source>
</evidence>
<evidence type="ECO:0000255" key="3"/>
<evidence type="ECO:0000255" key="4">
    <source>
        <dbReference type="PROSITE-ProRule" id="PRU00595"/>
    </source>
</evidence>
<evidence type="ECO:0000256" key="5">
    <source>
        <dbReference type="SAM" id="MobiDB-lite"/>
    </source>
</evidence>
<evidence type="ECO:0000303" key="6">
    <source>
    </source>
</evidence>
<evidence type="ECO:0000305" key="7"/>
<evidence type="ECO:0000312" key="8">
    <source>
        <dbReference type="EMBL" id="BAF23249.1"/>
    </source>
</evidence>
<evidence type="ECO:0000312" key="9">
    <source>
        <dbReference type="EMBL" id="BAT04494.1"/>
    </source>
</evidence>
<name>VLN5_ORYSJ</name>
<proteinExistence type="inferred from homology"/>